<reference key="1">
    <citation type="journal article" date="2002" name="Nature">
        <title>Comparison of the genomes of two Xanthomonas pathogens with differing host specificities.</title>
        <authorList>
            <person name="da Silva A.C.R."/>
            <person name="Ferro J.A."/>
            <person name="Reinach F.C."/>
            <person name="Farah C.S."/>
            <person name="Furlan L.R."/>
            <person name="Quaggio R.B."/>
            <person name="Monteiro-Vitorello C.B."/>
            <person name="Van Sluys M.A."/>
            <person name="Almeida N.F. Jr."/>
            <person name="Alves L.M.C."/>
            <person name="do Amaral A.M."/>
            <person name="Bertolini M.C."/>
            <person name="Camargo L.E.A."/>
            <person name="Camarotte G."/>
            <person name="Cannavan F."/>
            <person name="Cardozo J."/>
            <person name="Chambergo F."/>
            <person name="Ciapina L.P."/>
            <person name="Cicarelli R.M.B."/>
            <person name="Coutinho L.L."/>
            <person name="Cursino-Santos J.R."/>
            <person name="El-Dorry H."/>
            <person name="Faria J.B."/>
            <person name="Ferreira A.J.S."/>
            <person name="Ferreira R.C.C."/>
            <person name="Ferro M.I.T."/>
            <person name="Formighieri E.F."/>
            <person name="Franco M.C."/>
            <person name="Greggio C.C."/>
            <person name="Gruber A."/>
            <person name="Katsuyama A.M."/>
            <person name="Kishi L.T."/>
            <person name="Leite R.P."/>
            <person name="Lemos E.G.M."/>
            <person name="Lemos M.V.F."/>
            <person name="Locali E.C."/>
            <person name="Machado M.A."/>
            <person name="Madeira A.M.B.N."/>
            <person name="Martinez-Rossi N.M."/>
            <person name="Martins E.C."/>
            <person name="Meidanis J."/>
            <person name="Menck C.F.M."/>
            <person name="Miyaki C.Y."/>
            <person name="Moon D.H."/>
            <person name="Moreira L.M."/>
            <person name="Novo M.T.M."/>
            <person name="Okura V.K."/>
            <person name="Oliveira M.C."/>
            <person name="Oliveira V.R."/>
            <person name="Pereira H.A."/>
            <person name="Rossi A."/>
            <person name="Sena J.A.D."/>
            <person name="Silva C."/>
            <person name="de Souza R.F."/>
            <person name="Spinola L.A.F."/>
            <person name="Takita M.A."/>
            <person name="Tamura R.E."/>
            <person name="Teixeira E.C."/>
            <person name="Tezza R.I.D."/>
            <person name="Trindade dos Santos M."/>
            <person name="Truffi D."/>
            <person name="Tsai S.M."/>
            <person name="White F.F."/>
            <person name="Setubal J.C."/>
            <person name="Kitajima J.P."/>
        </authorList>
    </citation>
    <scope>NUCLEOTIDE SEQUENCE [LARGE SCALE GENOMIC DNA]</scope>
    <source>
        <strain>306</strain>
    </source>
</reference>
<protein>
    <recommendedName>
        <fullName evidence="1">Beta-hexosaminidase</fullName>
        <ecNumber evidence="1">3.2.1.52</ecNumber>
    </recommendedName>
    <alternativeName>
        <fullName evidence="1">Beta-N-acetylhexosaminidase</fullName>
    </alternativeName>
    <alternativeName>
        <fullName evidence="1">N-acetyl-beta-glucosaminidase</fullName>
    </alternativeName>
</protein>
<name>NAGZ_XANAC</name>
<sequence>MLLIGVAGTELSAQERDWLQHDAVAGVVLFKRNFASRTQVAELSAAIRAAAPRPVLICVDQEGGRVQRFREGFSALAPLQSFGAQYAQDPEAALAAARAHAQLMASEVRASGVDLSFAPVVDLGRGNRAIGDRAFSDEPQIVATFTRAYVQALHGAGMAATLKHFPGHGTVLEDTHVDHASDPRPLEVLQAEDLVPFVAGIEAGADAVMMAHVVYPQVAPEPAGYSQRWIEQILRGQMGFRGVVFSDDIGMAASFSAGGVAGRVHAHLDAGCDVVLVCHPELVAESLQAVQGRSLNTAALIGLIGRGALGWDGLLAGTDASFTTPLSAHFGTTA</sequence>
<evidence type="ECO:0000255" key="1">
    <source>
        <dbReference type="HAMAP-Rule" id="MF_00364"/>
    </source>
</evidence>
<proteinExistence type="inferred from homology"/>
<organism>
    <name type="scientific">Xanthomonas axonopodis pv. citri (strain 306)</name>
    <dbReference type="NCBI Taxonomy" id="190486"/>
    <lineage>
        <taxon>Bacteria</taxon>
        <taxon>Pseudomonadati</taxon>
        <taxon>Pseudomonadota</taxon>
        <taxon>Gammaproteobacteria</taxon>
        <taxon>Lysobacterales</taxon>
        <taxon>Lysobacteraceae</taxon>
        <taxon>Xanthomonas</taxon>
    </lineage>
</organism>
<gene>
    <name evidence="1" type="primary">nagZ</name>
    <name type="ordered locus">XAC1334</name>
</gene>
<accession>Q8PMU1</accession>
<keyword id="KW-0131">Cell cycle</keyword>
<keyword id="KW-0132">Cell division</keyword>
<keyword id="KW-0133">Cell shape</keyword>
<keyword id="KW-0961">Cell wall biogenesis/degradation</keyword>
<keyword id="KW-0963">Cytoplasm</keyword>
<keyword id="KW-0326">Glycosidase</keyword>
<keyword id="KW-0378">Hydrolase</keyword>
<keyword id="KW-0573">Peptidoglycan synthesis</keyword>
<dbReference type="EC" id="3.2.1.52" evidence="1"/>
<dbReference type="EMBL" id="AE008923">
    <property type="protein sequence ID" value="AAM36205.1"/>
    <property type="molecule type" value="Genomic_DNA"/>
</dbReference>
<dbReference type="RefSeq" id="WP_011050851.1">
    <property type="nucleotide sequence ID" value="NC_003919.1"/>
</dbReference>
<dbReference type="SMR" id="Q8PMU1"/>
<dbReference type="CAZy" id="GH3">
    <property type="family name" value="Glycoside Hydrolase Family 3"/>
</dbReference>
<dbReference type="GeneID" id="66910503"/>
<dbReference type="KEGG" id="xac:XAC1334"/>
<dbReference type="eggNOG" id="COG1472">
    <property type="taxonomic scope" value="Bacteria"/>
</dbReference>
<dbReference type="HOGENOM" id="CLU_008392_0_0_6"/>
<dbReference type="UniPathway" id="UPA00544"/>
<dbReference type="Proteomes" id="UP000000576">
    <property type="component" value="Chromosome"/>
</dbReference>
<dbReference type="GO" id="GO:0005737">
    <property type="term" value="C:cytoplasm"/>
    <property type="evidence" value="ECO:0007669"/>
    <property type="project" value="UniProtKB-SubCell"/>
</dbReference>
<dbReference type="GO" id="GO:0004563">
    <property type="term" value="F:beta-N-acetylhexosaminidase activity"/>
    <property type="evidence" value="ECO:0007669"/>
    <property type="project" value="UniProtKB-UniRule"/>
</dbReference>
<dbReference type="GO" id="GO:0005975">
    <property type="term" value="P:carbohydrate metabolic process"/>
    <property type="evidence" value="ECO:0007669"/>
    <property type="project" value="InterPro"/>
</dbReference>
<dbReference type="GO" id="GO:0051301">
    <property type="term" value="P:cell division"/>
    <property type="evidence" value="ECO:0007669"/>
    <property type="project" value="UniProtKB-KW"/>
</dbReference>
<dbReference type="GO" id="GO:0071555">
    <property type="term" value="P:cell wall organization"/>
    <property type="evidence" value="ECO:0007669"/>
    <property type="project" value="UniProtKB-KW"/>
</dbReference>
<dbReference type="GO" id="GO:0009252">
    <property type="term" value="P:peptidoglycan biosynthetic process"/>
    <property type="evidence" value="ECO:0007669"/>
    <property type="project" value="UniProtKB-KW"/>
</dbReference>
<dbReference type="GO" id="GO:0009254">
    <property type="term" value="P:peptidoglycan turnover"/>
    <property type="evidence" value="ECO:0007669"/>
    <property type="project" value="UniProtKB-UniRule"/>
</dbReference>
<dbReference type="GO" id="GO:0008360">
    <property type="term" value="P:regulation of cell shape"/>
    <property type="evidence" value="ECO:0007669"/>
    <property type="project" value="UniProtKB-KW"/>
</dbReference>
<dbReference type="FunFam" id="3.20.20.300:FF:000001">
    <property type="entry name" value="Beta-hexosaminidase"/>
    <property type="match status" value="1"/>
</dbReference>
<dbReference type="Gene3D" id="3.20.20.300">
    <property type="entry name" value="Glycoside hydrolase, family 3, N-terminal domain"/>
    <property type="match status" value="1"/>
</dbReference>
<dbReference type="HAMAP" id="MF_00364">
    <property type="entry name" value="NagZ"/>
    <property type="match status" value="1"/>
</dbReference>
<dbReference type="InterPro" id="IPR022956">
    <property type="entry name" value="Beta_hexosaminidase_bac"/>
</dbReference>
<dbReference type="InterPro" id="IPR019800">
    <property type="entry name" value="Glyco_hydro_3_AS"/>
</dbReference>
<dbReference type="InterPro" id="IPR001764">
    <property type="entry name" value="Glyco_hydro_3_N"/>
</dbReference>
<dbReference type="InterPro" id="IPR036962">
    <property type="entry name" value="Glyco_hydro_3_N_sf"/>
</dbReference>
<dbReference type="InterPro" id="IPR017853">
    <property type="entry name" value="Glycoside_hydrolase_SF"/>
</dbReference>
<dbReference type="InterPro" id="IPR050226">
    <property type="entry name" value="NagZ_Beta-hexosaminidase"/>
</dbReference>
<dbReference type="NCBIfam" id="NF003740">
    <property type="entry name" value="PRK05337.1"/>
    <property type="match status" value="1"/>
</dbReference>
<dbReference type="PANTHER" id="PTHR30480:SF13">
    <property type="entry name" value="BETA-HEXOSAMINIDASE"/>
    <property type="match status" value="1"/>
</dbReference>
<dbReference type="PANTHER" id="PTHR30480">
    <property type="entry name" value="BETA-HEXOSAMINIDASE-RELATED"/>
    <property type="match status" value="1"/>
</dbReference>
<dbReference type="Pfam" id="PF00933">
    <property type="entry name" value="Glyco_hydro_3"/>
    <property type="match status" value="1"/>
</dbReference>
<dbReference type="SUPFAM" id="SSF51445">
    <property type="entry name" value="(Trans)glycosidases"/>
    <property type="match status" value="1"/>
</dbReference>
<dbReference type="PROSITE" id="PS00775">
    <property type="entry name" value="GLYCOSYL_HYDROL_F3"/>
    <property type="match status" value="1"/>
</dbReference>
<comment type="function">
    <text evidence="1">Plays a role in peptidoglycan recycling by cleaving the terminal beta-1,4-linked N-acetylglucosamine (GlcNAc) from peptide-linked peptidoglycan fragments, giving rise to free GlcNAc, anhydro-N-acetylmuramic acid and anhydro-N-acetylmuramic acid-linked peptides.</text>
</comment>
<comment type="catalytic activity">
    <reaction evidence="1">
        <text>Hydrolysis of terminal non-reducing N-acetyl-D-hexosamine residues in N-acetyl-beta-D-hexosaminides.</text>
        <dbReference type="EC" id="3.2.1.52"/>
    </reaction>
</comment>
<comment type="pathway">
    <text evidence="1">Cell wall biogenesis; peptidoglycan recycling.</text>
</comment>
<comment type="subcellular location">
    <subcellularLocation>
        <location evidence="1">Cytoplasm</location>
    </subcellularLocation>
</comment>
<comment type="similarity">
    <text evidence="1">Belongs to the glycosyl hydrolase 3 family. NagZ subfamily.</text>
</comment>
<feature type="chain" id="PRO_0000210802" description="Beta-hexosaminidase">
    <location>
        <begin position="1"/>
        <end position="334"/>
    </location>
</feature>
<feature type="active site" description="Proton donor/acceptor" evidence="1">
    <location>
        <position position="176"/>
    </location>
</feature>
<feature type="active site" description="Nucleophile" evidence="1">
    <location>
        <position position="247"/>
    </location>
</feature>
<feature type="binding site" evidence="1">
    <location>
        <position position="60"/>
    </location>
    <ligand>
        <name>substrate</name>
    </ligand>
</feature>
<feature type="binding site" evidence="1">
    <location>
        <position position="68"/>
    </location>
    <ligand>
        <name>substrate</name>
    </ligand>
</feature>
<feature type="binding site" evidence="1">
    <location>
        <position position="133"/>
    </location>
    <ligand>
        <name>substrate</name>
    </ligand>
</feature>
<feature type="binding site" evidence="1">
    <location>
        <begin position="163"/>
        <end position="164"/>
    </location>
    <ligand>
        <name>substrate</name>
    </ligand>
</feature>
<feature type="site" description="Important for catalytic activity" evidence="1">
    <location>
        <position position="174"/>
    </location>
</feature>